<organism>
    <name type="scientific">Caenorhabditis elegans</name>
    <dbReference type="NCBI Taxonomy" id="6239"/>
    <lineage>
        <taxon>Eukaryota</taxon>
        <taxon>Metazoa</taxon>
        <taxon>Ecdysozoa</taxon>
        <taxon>Nematoda</taxon>
        <taxon>Chromadorea</taxon>
        <taxon>Rhabditida</taxon>
        <taxon>Rhabditina</taxon>
        <taxon>Rhabditomorpha</taxon>
        <taxon>Rhabditoidea</taxon>
        <taxon>Rhabditidae</taxon>
        <taxon>Peloderinae</taxon>
        <taxon>Caenorhabditis</taxon>
    </lineage>
</organism>
<comment type="function">
    <text evidence="2">Catalyzes the reversible conversion of 3-phosphohydroxypyruvate to phosphoserine and of 3-hydroxy-2-oxo-4-phosphonooxybutanoate to phosphohydroxythreonine.</text>
</comment>
<comment type="catalytic activity">
    <reaction>
        <text>O-phospho-L-serine + 2-oxoglutarate = 3-phosphooxypyruvate + L-glutamate</text>
        <dbReference type="Rhea" id="RHEA:14329"/>
        <dbReference type="ChEBI" id="CHEBI:16810"/>
        <dbReference type="ChEBI" id="CHEBI:18110"/>
        <dbReference type="ChEBI" id="CHEBI:29985"/>
        <dbReference type="ChEBI" id="CHEBI:57524"/>
        <dbReference type="EC" id="2.6.1.52"/>
    </reaction>
</comment>
<comment type="catalytic activity">
    <reaction>
        <text>4-(phosphooxy)-L-threonine + 2-oxoglutarate = (R)-3-hydroxy-2-oxo-4-phosphooxybutanoate + L-glutamate</text>
        <dbReference type="Rhea" id="RHEA:16573"/>
        <dbReference type="ChEBI" id="CHEBI:16810"/>
        <dbReference type="ChEBI" id="CHEBI:29985"/>
        <dbReference type="ChEBI" id="CHEBI:58452"/>
        <dbReference type="ChEBI" id="CHEBI:58538"/>
        <dbReference type="EC" id="2.6.1.52"/>
    </reaction>
</comment>
<comment type="cofactor">
    <cofactor evidence="1">
        <name>pyridoxal 5'-phosphate</name>
        <dbReference type="ChEBI" id="CHEBI:597326"/>
    </cofactor>
    <text evidence="1">Binds 1 pyridoxal phosphate per subunit.</text>
</comment>
<comment type="pathway">
    <text>Amino-acid biosynthesis; L-serine biosynthesis; L-serine from 3-phospho-D-glycerate: step 2/3.</text>
</comment>
<comment type="pathway">
    <text>Cofactor biosynthesis; pyridoxine 5'-phosphate biosynthesis; pyridoxine 5'-phosphate from D-erythrose 4-phosphate: step 3/5.</text>
</comment>
<comment type="subunit">
    <text evidence="1">Homodimer.</text>
</comment>
<comment type="similarity">
    <text evidence="3">Belongs to the class-V pyridoxal-phosphate-dependent aminotransferase family. SerC subfamily.</text>
</comment>
<gene>
    <name type="ORF">F26H9.5</name>
</gene>
<accession>P91856</accession>
<dbReference type="EC" id="2.6.1.52"/>
<dbReference type="EMBL" id="Z81516">
    <property type="protein sequence ID" value="CAB04204.1"/>
    <property type="molecule type" value="Genomic_DNA"/>
</dbReference>
<dbReference type="PIR" id="T21441">
    <property type="entry name" value="T21441"/>
</dbReference>
<dbReference type="RefSeq" id="NP_492483.1">
    <property type="nucleotide sequence ID" value="NM_060082.8"/>
</dbReference>
<dbReference type="SMR" id="P91856"/>
<dbReference type="BioGRID" id="38187">
    <property type="interactions" value="11"/>
</dbReference>
<dbReference type="FunCoup" id="P91856">
    <property type="interactions" value="1148"/>
</dbReference>
<dbReference type="STRING" id="6239.F26H9.5.1"/>
<dbReference type="PaxDb" id="6239-F26H9.5"/>
<dbReference type="PeptideAtlas" id="P91856"/>
<dbReference type="EnsemblMetazoa" id="F26H9.5.1">
    <property type="protein sequence ID" value="F26H9.5.1"/>
    <property type="gene ID" value="WBGene00009177"/>
</dbReference>
<dbReference type="EnsemblMetazoa" id="F26H9.5.2">
    <property type="protein sequence ID" value="F26H9.5.2"/>
    <property type="gene ID" value="WBGene00009177"/>
</dbReference>
<dbReference type="GeneID" id="172756"/>
<dbReference type="KEGG" id="cel:CELE_F26H9.5"/>
<dbReference type="UCSC" id="F26H9.5">
    <property type="organism name" value="c. elegans"/>
</dbReference>
<dbReference type="AGR" id="WB:WBGene00009177"/>
<dbReference type="CTD" id="172756"/>
<dbReference type="WormBase" id="F26H9.5">
    <property type="protein sequence ID" value="CE09710"/>
    <property type="gene ID" value="WBGene00009177"/>
</dbReference>
<dbReference type="eggNOG" id="KOG2790">
    <property type="taxonomic scope" value="Eukaryota"/>
</dbReference>
<dbReference type="GeneTree" id="ENSGT00940000153241"/>
<dbReference type="HOGENOM" id="CLU_034866_0_1_1"/>
<dbReference type="InParanoid" id="P91856"/>
<dbReference type="OMA" id="AFVYFCD"/>
<dbReference type="OrthoDB" id="1703350at2759"/>
<dbReference type="PhylomeDB" id="P91856"/>
<dbReference type="Reactome" id="R-CEL-977347">
    <property type="pathway name" value="Serine biosynthesis"/>
</dbReference>
<dbReference type="UniPathway" id="UPA00135">
    <property type="reaction ID" value="UER00197"/>
</dbReference>
<dbReference type="UniPathway" id="UPA00244">
    <property type="reaction ID" value="UER00311"/>
</dbReference>
<dbReference type="PRO" id="PR:P91856"/>
<dbReference type="Proteomes" id="UP000001940">
    <property type="component" value="Chromosome I"/>
</dbReference>
<dbReference type="Bgee" id="WBGene00009177">
    <property type="expression patterns" value="Expressed in adult organism and 4 other cell types or tissues"/>
</dbReference>
<dbReference type="GO" id="GO:0005737">
    <property type="term" value="C:cytoplasm"/>
    <property type="evidence" value="ECO:0000318"/>
    <property type="project" value="GO_Central"/>
</dbReference>
<dbReference type="GO" id="GO:0004648">
    <property type="term" value="F:O-phospho-L-serine:2-oxoglutarate aminotransferase activity"/>
    <property type="evidence" value="ECO:0000318"/>
    <property type="project" value="GO_Central"/>
</dbReference>
<dbReference type="GO" id="GO:0030170">
    <property type="term" value="F:pyridoxal phosphate binding"/>
    <property type="evidence" value="ECO:0000318"/>
    <property type="project" value="GO_Central"/>
</dbReference>
<dbReference type="GO" id="GO:0006564">
    <property type="term" value="P:L-serine biosynthetic process"/>
    <property type="evidence" value="ECO:0000318"/>
    <property type="project" value="GO_Central"/>
</dbReference>
<dbReference type="CDD" id="cd00611">
    <property type="entry name" value="PSAT_like"/>
    <property type="match status" value="1"/>
</dbReference>
<dbReference type="FunFam" id="3.40.640.10:FF:000010">
    <property type="entry name" value="Phosphoserine aminotransferase"/>
    <property type="match status" value="1"/>
</dbReference>
<dbReference type="FunFam" id="3.90.1150.10:FF:000006">
    <property type="entry name" value="Phosphoserine aminotransferase"/>
    <property type="match status" value="1"/>
</dbReference>
<dbReference type="Gene3D" id="3.90.1150.10">
    <property type="entry name" value="Aspartate Aminotransferase, domain 1"/>
    <property type="match status" value="1"/>
</dbReference>
<dbReference type="Gene3D" id="3.40.640.10">
    <property type="entry name" value="Type I PLP-dependent aspartate aminotransferase-like (Major domain)"/>
    <property type="match status" value="1"/>
</dbReference>
<dbReference type="HAMAP" id="MF_00160">
    <property type="entry name" value="SerC_aminotrans_5"/>
    <property type="match status" value="1"/>
</dbReference>
<dbReference type="InterPro" id="IPR000192">
    <property type="entry name" value="Aminotrans_V_dom"/>
</dbReference>
<dbReference type="InterPro" id="IPR020578">
    <property type="entry name" value="Aminotrans_V_PyrdxlP_BS"/>
</dbReference>
<dbReference type="InterPro" id="IPR022278">
    <property type="entry name" value="Pser_aminoTfrase"/>
</dbReference>
<dbReference type="InterPro" id="IPR015424">
    <property type="entry name" value="PyrdxlP-dep_Trfase"/>
</dbReference>
<dbReference type="InterPro" id="IPR015421">
    <property type="entry name" value="PyrdxlP-dep_Trfase_major"/>
</dbReference>
<dbReference type="InterPro" id="IPR015422">
    <property type="entry name" value="PyrdxlP-dep_Trfase_small"/>
</dbReference>
<dbReference type="NCBIfam" id="NF003764">
    <property type="entry name" value="PRK05355.1"/>
    <property type="match status" value="1"/>
</dbReference>
<dbReference type="NCBIfam" id="TIGR01364">
    <property type="entry name" value="serC_1"/>
    <property type="match status" value="1"/>
</dbReference>
<dbReference type="PANTHER" id="PTHR43247">
    <property type="entry name" value="PHOSPHOSERINE AMINOTRANSFERASE"/>
    <property type="match status" value="1"/>
</dbReference>
<dbReference type="PANTHER" id="PTHR43247:SF1">
    <property type="entry name" value="PHOSPHOSERINE AMINOTRANSFERASE"/>
    <property type="match status" value="1"/>
</dbReference>
<dbReference type="Pfam" id="PF00266">
    <property type="entry name" value="Aminotran_5"/>
    <property type="match status" value="1"/>
</dbReference>
<dbReference type="PIRSF" id="PIRSF000525">
    <property type="entry name" value="SerC"/>
    <property type="match status" value="1"/>
</dbReference>
<dbReference type="SUPFAM" id="SSF53383">
    <property type="entry name" value="PLP-dependent transferases"/>
    <property type="match status" value="1"/>
</dbReference>
<dbReference type="PROSITE" id="PS00595">
    <property type="entry name" value="AA_TRANSFER_CLASS_5"/>
    <property type="match status" value="1"/>
</dbReference>
<keyword id="KW-0028">Amino-acid biosynthesis</keyword>
<keyword id="KW-0032">Aminotransferase</keyword>
<keyword id="KW-0663">Pyridoxal phosphate</keyword>
<keyword id="KW-1185">Reference proteome</keyword>
<keyword id="KW-0718">Serine biosynthesis</keyword>
<keyword id="KW-0808">Transferase</keyword>
<proteinExistence type="inferred from homology"/>
<protein>
    <recommendedName>
        <fullName>Probable phosphoserine aminotransferase</fullName>
        <shortName>PSAT</shortName>
        <ecNumber>2.6.1.52</ecNumber>
    </recommendedName>
    <alternativeName>
        <fullName>Phosphohydroxythreonine aminotransferase</fullName>
    </alternativeName>
</protein>
<name>SERC_CAEEL</name>
<reference key="1">
    <citation type="journal article" date="1998" name="Science">
        <title>Genome sequence of the nematode C. elegans: a platform for investigating biology.</title>
        <authorList>
            <consortium name="The C. elegans sequencing consortium"/>
        </authorList>
    </citation>
    <scope>NUCLEOTIDE SEQUENCE [LARGE SCALE GENOMIC DNA]</scope>
    <source>
        <strain>Bristol N2</strain>
    </source>
</reference>
<feature type="chain" id="PRO_0000150138" description="Probable phosphoserine aminotransferase">
    <location>
        <begin position="1"/>
        <end position="370"/>
    </location>
</feature>
<feature type="binding site" evidence="1">
    <location>
        <position position="45"/>
    </location>
    <ligand>
        <name>L-glutamate</name>
        <dbReference type="ChEBI" id="CHEBI:29985"/>
    </ligand>
</feature>
<feature type="binding site" evidence="1">
    <location>
        <begin position="79"/>
        <end position="80"/>
    </location>
    <ligand>
        <name>pyridoxal 5'-phosphate</name>
        <dbReference type="ChEBI" id="CHEBI:597326"/>
    </ligand>
</feature>
<feature type="binding site" evidence="1">
    <location>
        <position position="105"/>
    </location>
    <ligand>
        <name>pyridoxal 5'-phosphate</name>
        <dbReference type="ChEBI" id="CHEBI:597326"/>
    </ligand>
</feature>
<feature type="binding site" evidence="1">
    <location>
        <position position="154"/>
    </location>
    <ligand>
        <name>pyridoxal 5'-phosphate</name>
        <dbReference type="ChEBI" id="CHEBI:597326"/>
    </ligand>
</feature>
<feature type="binding site" evidence="1">
    <location>
        <position position="175"/>
    </location>
    <ligand>
        <name>pyridoxal 5'-phosphate</name>
        <dbReference type="ChEBI" id="CHEBI:597326"/>
    </ligand>
</feature>
<feature type="binding site" evidence="1">
    <location>
        <position position="198"/>
    </location>
    <ligand>
        <name>pyridoxal 5'-phosphate</name>
        <dbReference type="ChEBI" id="CHEBI:597326"/>
    </ligand>
</feature>
<feature type="binding site" evidence="1">
    <location>
        <begin position="240"/>
        <end position="241"/>
    </location>
    <ligand>
        <name>pyridoxal 5'-phosphate</name>
        <dbReference type="ChEBI" id="CHEBI:597326"/>
    </ligand>
</feature>
<feature type="modified residue" description="N6-(pyridoxal phosphate)lysine" evidence="1">
    <location>
        <position position="199"/>
    </location>
</feature>
<sequence>MAAPGRKINFAAGPAKLPEEVLLKMQEEQLNFNNLGVSVIEMSHRSKEFGALLNETISLIRELMNVPDNFEILFMQGGGTGQFAAIPLNLKGDHEHADYIVTGAWSSKAADEAGKYINVKKVFQPSKPYVTVPDQENWVHDEKAAYLYYCANETVHGIEFTPTAPESHNVPLVADVSSNFMARPFDFKDHGVVFGGAQKNLGAAGLTIVIVRKDLIGKQQAITPSVFSYKEMIANNSLYNTPPTGGIYTTNLVLKWIKSKGGLQAIYELNLQKSGMIYDIIDNSNGFYHCAVDKRYRSIMNVCFRIGGPSGNDELEEKFLKGSIERNMISLKGHRSVGGIRASLYNAISVEETQVLATWMNEFQKLHNTN</sequence>
<evidence type="ECO:0000250" key="1"/>
<evidence type="ECO:0000250" key="2">
    <source>
        <dbReference type="UniProtKB" id="P10658"/>
    </source>
</evidence>
<evidence type="ECO:0000305" key="3"/>